<proteinExistence type="inferred from homology"/>
<organism>
    <name type="scientific">Streptococcus pyogenes serotype M12 (strain MGAS9429)</name>
    <dbReference type="NCBI Taxonomy" id="370551"/>
    <lineage>
        <taxon>Bacteria</taxon>
        <taxon>Bacillati</taxon>
        <taxon>Bacillota</taxon>
        <taxon>Bacilli</taxon>
        <taxon>Lactobacillales</taxon>
        <taxon>Streptococcaceae</taxon>
        <taxon>Streptococcus</taxon>
    </lineage>
</organism>
<keyword id="KW-0687">Ribonucleoprotein</keyword>
<keyword id="KW-0689">Ribosomal protein</keyword>
<evidence type="ECO:0000255" key="1">
    <source>
        <dbReference type="HAMAP-Rule" id="MF_00294"/>
    </source>
</evidence>
<protein>
    <recommendedName>
        <fullName evidence="1">Large ribosomal subunit protein bL33C</fullName>
    </recommendedName>
    <alternativeName>
        <fullName evidence="1">50S ribosomal protein L33 3</fullName>
    </alternativeName>
</protein>
<sequence>MRVNITLEHKESGERLYLTSKNKRNTPDRLQLKKYSPKLRKHVVFTEVK</sequence>
<dbReference type="EMBL" id="CP000259">
    <property type="protein sequence ID" value="ABF33014.1"/>
    <property type="molecule type" value="Genomic_DNA"/>
</dbReference>
<dbReference type="SMR" id="Q1JJF9"/>
<dbReference type="KEGG" id="spk:MGAS9429_Spy1827"/>
<dbReference type="HOGENOM" id="CLU_190949_3_2_9"/>
<dbReference type="Proteomes" id="UP000002433">
    <property type="component" value="Chromosome"/>
</dbReference>
<dbReference type="GO" id="GO:0005737">
    <property type="term" value="C:cytoplasm"/>
    <property type="evidence" value="ECO:0007669"/>
    <property type="project" value="UniProtKB-ARBA"/>
</dbReference>
<dbReference type="GO" id="GO:1990904">
    <property type="term" value="C:ribonucleoprotein complex"/>
    <property type="evidence" value="ECO:0007669"/>
    <property type="project" value="UniProtKB-KW"/>
</dbReference>
<dbReference type="GO" id="GO:0005840">
    <property type="term" value="C:ribosome"/>
    <property type="evidence" value="ECO:0007669"/>
    <property type="project" value="UniProtKB-KW"/>
</dbReference>
<dbReference type="GO" id="GO:0003735">
    <property type="term" value="F:structural constituent of ribosome"/>
    <property type="evidence" value="ECO:0007669"/>
    <property type="project" value="InterPro"/>
</dbReference>
<dbReference type="GO" id="GO:0006412">
    <property type="term" value="P:translation"/>
    <property type="evidence" value="ECO:0007669"/>
    <property type="project" value="UniProtKB-UniRule"/>
</dbReference>
<dbReference type="Gene3D" id="2.20.28.120">
    <property type="entry name" value="Ribosomal protein L33"/>
    <property type="match status" value="1"/>
</dbReference>
<dbReference type="HAMAP" id="MF_00294">
    <property type="entry name" value="Ribosomal_bL33"/>
    <property type="match status" value="1"/>
</dbReference>
<dbReference type="InterPro" id="IPR001705">
    <property type="entry name" value="Ribosomal_bL33"/>
</dbReference>
<dbReference type="InterPro" id="IPR018264">
    <property type="entry name" value="Ribosomal_bL33_CS"/>
</dbReference>
<dbReference type="InterPro" id="IPR038584">
    <property type="entry name" value="Ribosomal_bL33_sf"/>
</dbReference>
<dbReference type="InterPro" id="IPR011332">
    <property type="entry name" value="Ribosomal_zn-bd"/>
</dbReference>
<dbReference type="NCBIfam" id="NF001764">
    <property type="entry name" value="PRK00504.1"/>
    <property type="match status" value="1"/>
</dbReference>
<dbReference type="NCBIfam" id="NF001860">
    <property type="entry name" value="PRK00595.1"/>
    <property type="match status" value="1"/>
</dbReference>
<dbReference type="NCBIfam" id="TIGR01023">
    <property type="entry name" value="rpmG_bact"/>
    <property type="match status" value="1"/>
</dbReference>
<dbReference type="PANTHER" id="PTHR43168">
    <property type="entry name" value="50S RIBOSOMAL PROTEIN L33, CHLOROPLASTIC"/>
    <property type="match status" value="1"/>
</dbReference>
<dbReference type="PANTHER" id="PTHR43168:SF2">
    <property type="entry name" value="LARGE RIBOSOMAL SUBUNIT PROTEIN BL33C"/>
    <property type="match status" value="1"/>
</dbReference>
<dbReference type="Pfam" id="PF00471">
    <property type="entry name" value="Ribosomal_L33"/>
    <property type="match status" value="1"/>
</dbReference>
<dbReference type="SUPFAM" id="SSF57829">
    <property type="entry name" value="Zn-binding ribosomal proteins"/>
    <property type="match status" value="1"/>
</dbReference>
<dbReference type="PROSITE" id="PS00582">
    <property type="entry name" value="RIBOSOMAL_L33"/>
    <property type="match status" value="1"/>
</dbReference>
<accession>Q1JJF9</accession>
<feature type="chain" id="PRO_0000356722" description="Large ribosomal subunit protein bL33C">
    <location>
        <begin position="1"/>
        <end position="49"/>
    </location>
</feature>
<comment type="similarity">
    <text evidence="1">Belongs to the bacterial ribosomal protein bL33 family.</text>
</comment>
<gene>
    <name evidence="1" type="primary">rpmG3</name>
    <name type="ordered locus">MGAS9429_Spy1827</name>
</gene>
<reference key="1">
    <citation type="journal article" date="2006" name="Proc. Natl. Acad. Sci. U.S.A.">
        <title>Molecular genetic anatomy of inter- and intraserotype variation in the human bacterial pathogen group A Streptococcus.</title>
        <authorList>
            <person name="Beres S.B."/>
            <person name="Richter E.W."/>
            <person name="Nagiec M.J."/>
            <person name="Sumby P."/>
            <person name="Porcella S.F."/>
            <person name="DeLeo F.R."/>
            <person name="Musser J.M."/>
        </authorList>
    </citation>
    <scope>NUCLEOTIDE SEQUENCE [LARGE SCALE GENOMIC DNA]</scope>
    <source>
        <strain>MGAS9429</strain>
    </source>
</reference>
<name>RL333_STRPC</name>